<comment type="function">
    <text evidence="1">Catalyzes the transfer of the phosphoribosyl group of 5-phosphorylribose-1-pyrophosphate (PRPP) to anthranilate to yield N-(5'-phosphoribosyl)-anthranilate (PRA).</text>
</comment>
<comment type="catalytic activity">
    <reaction evidence="1">
        <text>N-(5-phospho-beta-D-ribosyl)anthranilate + diphosphate = 5-phospho-alpha-D-ribose 1-diphosphate + anthranilate</text>
        <dbReference type="Rhea" id="RHEA:11768"/>
        <dbReference type="ChEBI" id="CHEBI:16567"/>
        <dbReference type="ChEBI" id="CHEBI:18277"/>
        <dbReference type="ChEBI" id="CHEBI:33019"/>
        <dbReference type="ChEBI" id="CHEBI:58017"/>
        <dbReference type="EC" id="2.4.2.18"/>
    </reaction>
</comment>
<comment type="cofactor">
    <cofactor evidence="1">
        <name>Mg(2+)</name>
        <dbReference type="ChEBI" id="CHEBI:18420"/>
    </cofactor>
    <text evidence="1">Binds 2 magnesium ions per monomer.</text>
</comment>
<comment type="pathway">
    <text evidence="1">Amino-acid biosynthesis; L-tryptophan biosynthesis; L-tryptophan from chorismate: step 2/5.</text>
</comment>
<comment type="subunit">
    <text evidence="1">Homodimer.</text>
</comment>
<comment type="similarity">
    <text evidence="1">Belongs to the anthranilate phosphoribosyltransferase family.</text>
</comment>
<comment type="sequence caution" evidence="2">
    <conflict type="erroneous initiation">
        <sequence resource="EMBL-CDS" id="ABF77472"/>
    </conflict>
    <text>Truncated N-terminus.</text>
</comment>
<proteinExistence type="inferred from homology"/>
<sequence>MTITPQEALQRTIEHREIFHDEMLHLMRLIMRGDLSPVMAAAIITGLRVKKETIGEIAAAATVMREFANHVEVQDNSNFVDIVGTGGDGSHTFNISTASMFVTAAAGAKVAKHGNRGVSSKSGSADVLEALGVNIDLQSEQVAASIAETGMGFMFAPNHHPAMKNIAAVRRELGVRTIFNILGPLTNPAGAPNQLMGVFHPDLVGIQVRVMQRLGAQHVLVVYGKDGMDEVSLGAATLVGELRDGKVHEYEIHPEDFGLQMVSNRTLKVENADESRTMLLGALDNQPGVAREIVTLNAGTALYAANIAESIADGIQLAREAIASGKARAKVDELVRFTQQFKR</sequence>
<organism>
    <name type="scientific">Burkholderia orbicola (strain AU 1054)</name>
    <dbReference type="NCBI Taxonomy" id="331271"/>
    <lineage>
        <taxon>Bacteria</taxon>
        <taxon>Pseudomonadati</taxon>
        <taxon>Pseudomonadota</taxon>
        <taxon>Betaproteobacteria</taxon>
        <taxon>Burkholderiales</taxon>
        <taxon>Burkholderiaceae</taxon>
        <taxon>Burkholderia</taxon>
        <taxon>Burkholderia cepacia complex</taxon>
        <taxon>Burkholderia orbicola</taxon>
    </lineage>
</organism>
<gene>
    <name evidence="1" type="primary">trpD</name>
    <name type="ordered locus">Bcen_2573</name>
</gene>
<reference key="1">
    <citation type="submission" date="2006-05" db="EMBL/GenBank/DDBJ databases">
        <title>Complete sequence of chromosome 1 of Burkholderia cenocepacia AU 1054.</title>
        <authorList>
            <consortium name="US DOE Joint Genome Institute"/>
            <person name="Copeland A."/>
            <person name="Lucas S."/>
            <person name="Lapidus A."/>
            <person name="Barry K."/>
            <person name="Detter J.C."/>
            <person name="Glavina del Rio T."/>
            <person name="Hammon N."/>
            <person name="Israni S."/>
            <person name="Dalin E."/>
            <person name="Tice H."/>
            <person name="Pitluck S."/>
            <person name="Chain P."/>
            <person name="Malfatti S."/>
            <person name="Shin M."/>
            <person name="Vergez L."/>
            <person name="Schmutz J."/>
            <person name="Larimer F."/>
            <person name="Land M."/>
            <person name="Hauser L."/>
            <person name="Kyrpides N."/>
            <person name="Lykidis A."/>
            <person name="LiPuma J.J."/>
            <person name="Konstantinidis K."/>
            <person name="Tiedje J.M."/>
            <person name="Richardson P."/>
        </authorList>
    </citation>
    <scope>NUCLEOTIDE SEQUENCE [LARGE SCALE GENOMIC DNA]</scope>
    <source>
        <strain>AU 1054</strain>
    </source>
</reference>
<keyword id="KW-0028">Amino-acid biosynthesis</keyword>
<keyword id="KW-0057">Aromatic amino acid biosynthesis</keyword>
<keyword id="KW-0328">Glycosyltransferase</keyword>
<keyword id="KW-0460">Magnesium</keyword>
<keyword id="KW-0479">Metal-binding</keyword>
<keyword id="KW-0808">Transferase</keyword>
<keyword id="KW-0822">Tryptophan biosynthesis</keyword>
<evidence type="ECO:0000255" key="1">
    <source>
        <dbReference type="HAMAP-Rule" id="MF_00211"/>
    </source>
</evidence>
<evidence type="ECO:0000305" key="2"/>
<name>TRPD_BURO1</name>
<accession>Q1BSD3</accession>
<feature type="chain" id="PRO_0000325416" description="Anthranilate phosphoribosyltransferase">
    <location>
        <begin position="1"/>
        <end position="343"/>
    </location>
</feature>
<feature type="binding site" evidence="1">
    <location>
        <position position="84"/>
    </location>
    <ligand>
        <name>5-phospho-alpha-D-ribose 1-diphosphate</name>
        <dbReference type="ChEBI" id="CHEBI:58017"/>
    </ligand>
</feature>
<feature type="binding site" evidence="1">
    <location>
        <position position="84"/>
    </location>
    <ligand>
        <name>anthranilate</name>
        <dbReference type="ChEBI" id="CHEBI:16567"/>
        <label>1</label>
    </ligand>
</feature>
<feature type="binding site" evidence="1">
    <location>
        <begin position="87"/>
        <end position="88"/>
    </location>
    <ligand>
        <name>5-phospho-alpha-D-ribose 1-diphosphate</name>
        <dbReference type="ChEBI" id="CHEBI:58017"/>
    </ligand>
</feature>
<feature type="binding site" evidence="1">
    <location>
        <position position="92"/>
    </location>
    <ligand>
        <name>5-phospho-alpha-D-ribose 1-diphosphate</name>
        <dbReference type="ChEBI" id="CHEBI:58017"/>
    </ligand>
</feature>
<feature type="binding site" evidence="1">
    <location>
        <begin position="94"/>
        <end position="97"/>
    </location>
    <ligand>
        <name>5-phospho-alpha-D-ribose 1-diphosphate</name>
        <dbReference type="ChEBI" id="CHEBI:58017"/>
    </ligand>
</feature>
<feature type="binding site" evidence="1">
    <location>
        <position position="96"/>
    </location>
    <ligand>
        <name>Mg(2+)</name>
        <dbReference type="ChEBI" id="CHEBI:18420"/>
        <label>1</label>
    </ligand>
</feature>
<feature type="binding site" evidence="1">
    <location>
        <begin position="112"/>
        <end position="120"/>
    </location>
    <ligand>
        <name>5-phospho-alpha-D-ribose 1-diphosphate</name>
        <dbReference type="ChEBI" id="CHEBI:58017"/>
    </ligand>
</feature>
<feature type="binding site" evidence="1">
    <location>
        <position position="115"/>
    </location>
    <ligand>
        <name>anthranilate</name>
        <dbReference type="ChEBI" id="CHEBI:16567"/>
        <label>1</label>
    </ligand>
</feature>
<feature type="binding site" evidence="1">
    <location>
        <position position="124"/>
    </location>
    <ligand>
        <name>5-phospho-alpha-D-ribose 1-diphosphate</name>
        <dbReference type="ChEBI" id="CHEBI:58017"/>
    </ligand>
</feature>
<feature type="binding site" evidence="1">
    <location>
        <position position="170"/>
    </location>
    <ligand>
        <name>anthranilate</name>
        <dbReference type="ChEBI" id="CHEBI:16567"/>
        <label>2</label>
    </ligand>
</feature>
<feature type="binding site" evidence="1">
    <location>
        <position position="229"/>
    </location>
    <ligand>
        <name>Mg(2+)</name>
        <dbReference type="ChEBI" id="CHEBI:18420"/>
        <label>2</label>
    </ligand>
</feature>
<feature type="binding site" evidence="1">
    <location>
        <position position="230"/>
    </location>
    <ligand>
        <name>Mg(2+)</name>
        <dbReference type="ChEBI" id="CHEBI:18420"/>
        <label>1</label>
    </ligand>
</feature>
<feature type="binding site" evidence="1">
    <location>
        <position position="230"/>
    </location>
    <ligand>
        <name>Mg(2+)</name>
        <dbReference type="ChEBI" id="CHEBI:18420"/>
        <label>2</label>
    </ligand>
</feature>
<protein>
    <recommendedName>
        <fullName evidence="1">Anthranilate phosphoribosyltransferase</fullName>
        <ecNumber evidence="1">2.4.2.18</ecNumber>
    </recommendedName>
</protein>
<dbReference type="EC" id="2.4.2.18" evidence="1"/>
<dbReference type="EMBL" id="CP000378">
    <property type="protein sequence ID" value="ABF77472.1"/>
    <property type="status" value="ALT_INIT"/>
    <property type="molecule type" value="Genomic_DNA"/>
</dbReference>
<dbReference type="SMR" id="Q1BSD3"/>
<dbReference type="HOGENOM" id="CLU_034315_2_1_4"/>
<dbReference type="UniPathway" id="UPA00035">
    <property type="reaction ID" value="UER00041"/>
</dbReference>
<dbReference type="GO" id="GO:0005829">
    <property type="term" value="C:cytosol"/>
    <property type="evidence" value="ECO:0007669"/>
    <property type="project" value="TreeGrafter"/>
</dbReference>
<dbReference type="GO" id="GO:0004048">
    <property type="term" value="F:anthranilate phosphoribosyltransferase activity"/>
    <property type="evidence" value="ECO:0007669"/>
    <property type="project" value="UniProtKB-UniRule"/>
</dbReference>
<dbReference type="GO" id="GO:0000287">
    <property type="term" value="F:magnesium ion binding"/>
    <property type="evidence" value="ECO:0007669"/>
    <property type="project" value="UniProtKB-UniRule"/>
</dbReference>
<dbReference type="GO" id="GO:0000162">
    <property type="term" value="P:L-tryptophan biosynthetic process"/>
    <property type="evidence" value="ECO:0007669"/>
    <property type="project" value="UniProtKB-UniRule"/>
</dbReference>
<dbReference type="FunFam" id="1.20.970.10:FF:000006">
    <property type="entry name" value="Anthranilate phosphoribosyltransferase"/>
    <property type="match status" value="1"/>
</dbReference>
<dbReference type="FunFam" id="3.40.1030.10:FF:000002">
    <property type="entry name" value="Anthranilate phosphoribosyltransferase"/>
    <property type="match status" value="1"/>
</dbReference>
<dbReference type="Gene3D" id="3.40.1030.10">
    <property type="entry name" value="Nucleoside phosphorylase/phosphoribosyltransferase catalytic domain"/>
    <property type="match status" value="1"/>
</dbReference>
<dbReference type="Gene3D" id="1.20.970.10">
    <property type="entry name" value="Transferase, Pyrimidine Nucleoside Phosphorylase, Chain C"/>
    <property type="match status" value="1"/>
</dbReference>
<dbReference type="HAMAP" id="MF_00211">
    <property type="entry name" value="TrpD"/>
    <property type="match status" value="1"/>
</dbReference>
<dbReference type="InterPro" id="IPR005940">
    <property type="entry name" value="Anthranilate_Pribosyl_Tfrase"/>
</dbReference>
<dbReference type="InterPro" id="IPR000312">
    <property type="entry name" value="Glycosyl_Trfase_fam3"/>
</dbReference>
<dbReference type="InterPro" id="IPR017459">
    <property type="entry name" value="Glycosyl_Trfase_fam3_N_dom"/>
</dbReference>
<dbReference type="InterPro" id="IPR036320">
    <property type="entry name" value="Glycosyl_Trfase_fam3_N_dom_sf"/>
</dbReference>
<dbReference type="InterPro" id="IPR035902">
    <property type="entry name" value="Nuc_phospho_transferase"/>
</dbReference>
<dbReference type="NCBIfam" id="TIGR01245">
    <property type="entry name" value="trpD"/>
    <property type="match status" value="1"/>
</dbReference>
<dbReference type="PANTHER" id="PTHR43285">
    <property type="entry name" value="ANTHRANILATE PHOSPHORIBOSYLTRANSFERASE"/>
    <property type="match status" value="1"/>
</dbReference>
<dbReference type="PANTHER" id="PTHR43285:SF2">
    <property type="entry name" value="ANTHRANILATE PHOSPHORIBOSYLTRANSFERASE"/>
    <property type="match status" value="1"/>
</dbReference>
<dbReference type="Pfam" id="PF02885">
    <property type="entry name" value="Glycos_trans_3N"/>
    <property type="match status" value="1"/>
</dbReference>
<dbReference type="Pfam" id="PF00591">
    <property type="entry name" value="Glycos_transf_3"/>
    <property type="match status" value="1"/>
</dbReference>
<dbReference type="SUPFAM" id="SSF52418">
    <property type="entry name" value="Nucleoside phosphorylase/phosphoribosyltransferase catalytic domain"/>
    <property type="match status" value="1"/>
</dbReference>
<dbReference type="SUPFAM" id="SSF47648">
    <property type="entry name" value="Nucleoside phosphorylase/phosphoribosyltransferase N-terminal domain"/>
    <property type="match status" value="1"/>
</dbReference>